<evidence type="ECO:0000255" key="1">
    <source>
        <dbReference type="HAMAP-Rule" id="MF_00013"/>
    </source>
</evidence>
<evidence type="ECO:0000255" key="2">
    <source>
        <dbReference type="PROSITE-ProRule" id="PRU01067"/>
    </source>
</evidence>
<dbReference type="EC" id="2.3.1.181" evidence="1"/>
<dbReference type="EMBL" id="CP001358">
    <property type="protein sequence ID" value="ACL49971.1"/>
    <property type="molecule type" value="Genomic_DNA"/>
</dbReference>
<dbReference type="SMR" id="B8J3G1"/>
<dbReference type="STRING" id="525146.Ddes_2075"/>
<dbReference type="KEGG" id="dds:Ddes_2075"/>
<dbReference type="eggNOG" id="COG0321">
    <property type="taxonomic scope" value="Bacteria"/>
</dbReference>
<dbReference type="HOGENOM" id="CLU_035168_1_1_7"/>
<dbReference type="UniPathway" id="UPA00538">
    <property type="reaction ID" value="UER00592"/>
</dbReference>
<dbReference type="GO" id="GO:0005737">
    <property type="term" value="C:cytoplasm"/>
    <property type="evidence" value="ECO:0007669"/>
    <property type="project" value="UniProtKB-SubCell"/>
</dbReference>
<dbReference type="GO" id="GO:0033819">
    <property type="term" value="F:lipoyl(octanoyl) transferase activity"/>
    <property type="evidence" value="ECO:0007669"/>
    <property type="project" value="UniProtKB-EC"/>
</dbReference>
<dbReference type="GO" id="GO:0036211">
    <property type="term" value="P:protein modification process"/>
    <property type="evidence" value="ECO:0007669"/>
    <property type="project" value="InterPro"/>
</dbReference>
<dbReference type="CDD" id="cd16444">
    <property type="entry name" value="LipB"/>
    <property type="match status" value="1"/>
</dbReference>
<dbReference type="Gene3D" id="3.30.930.10">
    <property type="entry name" value="Bira Bifunctional Protein, Domain 2"/>
    <property type="match status" value="1"/>
</dbReference>
<dbReference type="HAMAP" id="MF_00013">
    <property type="entry name" value="LipB"/>
    <property type="match status" value="1"/>
</dbReference>
<dbReference type="InterPro" id="IPR045864">
    <property type="entry name" value="aa-tRNA-synth_II/BPL/LPL"/>
</dbReference>
<dbReference type="InterPro" id="IPR004143">
    <property type="entry name" value="BPL_LPL_catalytic"/>
</dbReference>
<dbReference type="InterPro" id="IPR000544">
    <property type="entry name" value="Octanoyltransferase"/>
</dbReference>
<dbReference type="InterPro" id="IPR020605">
    <property type="entry name" value="Octanoyltransferase_CS"/>
</dbReference>
<dbReference type="NCBIfam" id="TIGR00214">
    <property type="entry name" value="lipB"/>
    <property type="match status" value="1"/>
</dbReference>
<dbReference type="PANTHER" id="PTHR10993:SF7">
    <property type="entry name" value="LIPOYLTRANSFERASE 2, MITOCHONDRIAL-RELATED"/>
    <property type="match status" value="1"/>
</dbReference>
<dbReference type="PANTHER" id="PTHR10993">
    <property type="entry name" value="OCTANOYLTRANSFERASE"/>
    <property type="match status" value="1"/>
</dbReference>
<dbReference type="Pfam" id="PF21948">
    <property type="entry name" value="LplA-B_cat"/>
    <property type="match status" value="1"/>
</dbReference>
<dbReference type="PIRSF" id="PIRSF016262">
    <property type="entry name" value="LPLase"/>
    <property type="match status" value="1"/>
</dbReference>
<dbReference type="SUPFAM" id="SSF55681">
    <property type="entry name" value="Class II aaRS and biotin synthetases"/>
    <property type="match status" value="1"/>
</dbReference>
<dbReference type="PROSITE" id="PS51733">
    <property type="entry name" value="BPL_LPL_CATALYTIC"/>
    <property type="match status" value="1"/>
</dbReference>
<dbReference type="PROSITE" id="PS01313">
    <property type="entry name" value="LIPB"/>
    <property type="match status" value="1"/>
</dbReference>
<proteinExistence type="inferred from homology"/>
<organism>
    <name type="scientific">Desulfovibrio desulfuricans (strain ATCC 27774 / DSM 6949 / MB)</name>
    <dbReference type="NCBI Taxonomy" id="525146"/>
    <lineage>
        <taxon>Bacteria</taxon>
        <taxon>Pseudomonadati</taxon>
        <taxon>Thermodesulfobacteriota</taxon>
        <taxon>Desulfovibrionia</taxon>
        <taxon>Desulfovibrionales</taxon>
        <taxon>Desulfovibrionaceae</taxon>
        <taxon>Desulfovibrio</taxon>
    </lineage>
</organism>
<reference key="1">
    <citation type="submission" date="2009-01" db="EMBL/GenBank/DDBJ databases">
        <title>Complete sequence of Desulfovibrio desulfuricans subsp. desulfuricans str. ATCC 27774.</title>
        <authorList>
            <consortium name="US DOE Joint Genome Institute"/>
            <person name="Lucas S."/>
            <person name="Copeland A."/>
            <person name="Lapidus A."/>
            <person name="Glavina del Rio T."/>
            <person name="Tice H."/>
            <person name="Bruce D."/>
            <person name="Goodwin L."/>
            <person name="Pitluck S."/>
            <person name="Sims D."/>
            <person name="Lu M."/>
            <person name="Kiss H."/>
            <person name="Meineke L."/>
            <person name="Brettin T."/>
            <person name="Detter J.C."/>
            <person name="Han C."/>
            <person name="Larimer F."/>
            <person name="Land M."/>
            <person name="Hauser L."/>
            <person name="Kyrpides N."/>
            <person name="Ovchinnikova G."/>
            <person name="Hazen T.C."/>
        </authorList>
    </citation>
    <scope>NUCLEOTIDE SEQUENCE [LARGE SCALE GENOMIC DNA]</scope>
    <source>
        <strain>ATCC 27774 / DSM 6949 / MB</strain>
    </source>
</reference>
<feature type="chain" id="PRO_1000116544" description="Octanoyltransferase">
    <location>
        <begin position="1"/>
        <end position="237"/>
    </location>
</feature>
<feature type="domain" description="BPL/LPL catalytic" evidence="2">
    <location>
        <begin position="27"/>
        <end position="210"/>
    </location>
</feature>
<feature type="active site" description="Acyl-thioester intermediate" evidence="1">
    <location>
        <position position="170"/>
    </location>
</feature>
<feature type="binding site" evidence="1">
    <location>
        <begin position="72"/>
        <end position="79"/>
    </location>
    <ligand>
        <name>substrate</name>
    </ligand>
</feature>
<feature type="binding site" evidence="1">
    <location>
        <begin position="139"/>
        <end position="141"/>
    </location>
    <ligand>
        <name>substrate</name>
    </ligand>
</feature>
<feature type="binding site" evidence="1">
    <location>
        <begin position="152"/>
        <end position="154"/>
    </location>
    <ligand>
        <name>substrate</name>
    </ligand>
</feature>
<feature type="site" description="Lowers pKa of active site Cys" evidence="1">
    <location>
        <position position="136"/>
    </location>
</feature>
<protein>
    <recommendedName>
        <fullName evidence="1">Octanoyltransferase</fullName>
        <ecNumber evidence="1">2.3.1.181</ecNumber>
    </recommendedName>
    <alternativeName>
        <fullName evidence="1">Lipoate-protein ligase B</fullName>
    </alternativeName>
    <alternativeName>
        <fullName evidence="1">Lipoyl/octanoyl transferase</fullName>
    </alternativeName>
    <alternativeName>
        <fullName evidence="1">Octanoyl-[acyl-carrier-protein]-protein N-octanoyltransferase</fullName>
    </alternativeName>
</protein>
<gene>
    <name evidence="1" type="primary">lipB</name>
    <name type="ordered locus">Ddes_2075</name>
</gene>
<keyword id="KW-0012">Acyltransferase</keyword>
<keyword id="KW-0963">Cytoplasm</keyword>
<keyword id="KW-0808">Transferase</keyword>
<accession>B8J3G1</accession>
<sequence length="237" mass="25728">MLGFDLGRTGYEDAFTLQKQVQAMVQSGGDDILLLLEHPPTVSIGKNSGAENVPPHLQDMWNGHVDIVHSTRGGNVTCHFPGQLVAYPVISLKKRSGGIRAYVHDLEEAAIRMLARFGVTAARRQGFPGVWTGERKIASLGIAVSRYVTMHGMALNVAEDLSLFNIISPCGLEGVAATSIARETAGPVPDMPAVKTAFLEEFYHIFQPAGDHAQPLPTLRTTQDLMTLLQDAQRTEK</sequence>
<name>LIPB_DESDA</name>
<comment type="function">
    <text evidence="1">Catalyzes the transfer of endogenously produced octanoic acid from octanoyl-acyl-carrier-protein onto the lipoyl domains of lipoate-dependent enzymes. Lipoyl-ACP can also act as a substrate although octanoyl-ACP is likely to be the physiological substrate.</text>
</comment>
<comment type="catalytic activity">
    <reaction evidence="1">
        <text>octanoyl-[ACP] + L-lysyl-[protein] = N(6)-octanoyl-L-lysyl-[protein] + holo-[ACP] + H(+)</text>
        <dbReference type="Rhea" id="RHEA:17665"/>
        <dbReference type="Rhea" id="RHEA-COMP:9636"/>
        <dbReference type="Rhea" id="RHEA-COMP:9685"/>
        <dbReference type="Rhea" id="RHEA-COMP:9752"/>
        <dbReference type="Rhea" id="RHEA-COMP:9928"/>
        <dbReference type="ChEBI" id="CHEBI:15378"/>
        <dbReference type="ChEBI" id="CHEBI:29969"/>
        <dbReference type="ChEBI" id="CHEBI:64479"/>
        <dbReference type="ChEBI" id="CHEBI:78463"/>
        <dbReference type="ChEBI" id="CHEBI:78809"/>
        <dbReference type="EC" id="2.3.1.181"/>
    </reaction>
</comment>
<comment type="pathway">
    <text evidence="1">Protein modification; protein lipoylation via endogenous pathway; protein N(6)-(lipoyl)lysine from octanoyl-[acyl-carrier-protein]: step 1/2.</text>
</comment>
<comment type="subcellular location">
    <subcellularLocation>
        <location evidence="1">Cytoplasm</location>
    </subcellularLocation>
</comment>
<comment type="miscellaneous">
    <text evidence="1">In the reaction, the free carboxyl group of octanoic acid is attached via an amide linkage to the epsilon-amino group of a specific lysine residue of lipoyl domains of lipoate-dependent enzymes.</text>
</comment>
<comment type="similarity">
    <text evidence="1">Belongs to the LipB family.</text>
</comment>